<reference key="1">
    <citation type="journal article" date="2001" name="DNA Res.">
        <title>Complete genomic sequence of the filamentous nitrogen-fixing cyanobacterium Anabaena sp. strain PCC 7120.</title>
        <authorList>
            <person name="Kaneko T."/>
            <person name="Nakamura Y."/>
            <person name="Wolk C.P."/>
            <person name="Kuritz T."/>
            <person name="Sasamoto S."/>
            <person name="Watanabe A."/>
            <person name="Iriguchi M."/>
            <person name="Ishikawa A."/>
            <person name="Kawashima K."/>
            <person name="Kimura T."/>
            <person name="Kishida Y."/>
            <person name="Kohara M."/>
            <person name="Matsumoto M."/>
            <person name="Matsuno A."/>
            <person name="Muraki A."/>
            <person name="Nakazaki N."/>
            <person name="Shimpo S."/>
            <person name="Sugimoto M."/>
            <person name="Takazawa M."/>
            <person name="Yamada M."/>
            <person name="Yasuda M."/>
            <person name="Tabata S."/>
        </authorList>
    </citation>
    <scope>NUCLEOTIDE SEQUENCE [LARGE SCALE GENOMIC DNA]</scope>
    <source>
        <strain>PCC 7120 / SAG 25.82 / UTEX 2576</strain>
    </source>
</reference>
<proteinExistence type="inferred from homology"/>
<protein>
    <recommendedName>
        <fullName evidence="1">1,4-dihydroxy-2-naphthoyl-CoA hydrolase</fullName>
        <shortName evidence="1">DHNA-CoA hydrolase</shortName>
        <ecNumber evidence="1">3.1.2.28</ecNumber>
    </recommendedName>
    <alternativeName>
        <fullName evidence="1">DHNA-CoA thioesterase</fullName>
    </alternativeName>
</protein>
<gene>
    <name type="ordered locus">alr2465</name>
</gene>
<comment type="function">
    <text evidence="1">Catalyzes the hydrolysis of 1,4-dihydroxy-2-naphthoyl-CoA (DHNA-CoA) to 1,4-dihydroxy-2-naphthoate (DHNA), a reaction involved in phylloquinone (vitamin K1) biosynthesis.</text>
</comment>
<comment type="catalytic activity">
    <reaction evidence="1">
        <text>1,4-dihydroxy-2-naphthoyl-CoA + H2O = 1,4-dihydroxy-2-naphthoate + CoA + H(+)</text>
        <dbReference type="Rhea" id="RHEA:26309"/>
        <dbReference type="ChEBI" id="CHEBI:11173"/>
        <dbReference type="ChEBI" id="CHEBI:15377"/>
        <dbReference type="ChEBI" id="CHEBI:15378"/>
        <dbReference type="ChEBI" id="CHEBI:57287"/>
        <dbReference type="ChEBI" id="CHEBI:58897"/>
        <dbReference type="EC" id="3.1.2.28"/>
    </reaction>
</comment>
<comment type="pathway">
    <text evidence="1">Cofactor biosynthesis; phylloquinone biosynthesis.</text>
</comment>
<comment type="pathway">
    <text evidence="1">Quinol/quinone metabolism; 1,4-dihydroxy-2-naphthoate biosynthesis; 1,4-dihydroxy-2-naphthoate from chorismate: step 7/7.</text>
</comment>
<comment type="similarity">
    <text evidence="1">Belongs to the 4-hydroxybenzoyl-CoA thioesterase family. DHNA-CoA hydrolase subfamily.</text>
</comment>
<name>DNCH_NOSS1</name>
<feature type="chain" id="PRO_0000377008" description="1,4-dihydroxy-2-naphthoyl-CoA hydrolase">
    <location>
        <begin position="1"/>
        <end position="148"/>
    </location>
</feature>
<feature type="active site" evidence="1">
    <location>
        <position position="15"/>
    </location>
</feature>
<sequence length="148" mass="16864">MPFTYHRTINFQDTDAAGVVYFANILSICHEGYEASLRTSGISLKEFFTNPSMAFPIVHASVDFLRPLFCGAQVIISLVPQKIGAEKFEINYEIYLADVLVAKAVTRHVCIDANTRSKQELSMEIIQWLDGYRKDTEEVERRKAREVV</sequence>
<organism>
    <name type="scientific">Nostoc sp. (strain PCC 7120 / SAG 25.82 / UTEX 2576)</name>
    <dbReference type="NCBI Taxonomy" id="103690"/>
    <lineage>
        <taxon>Bacteria</taxon>
        <taxon>Bacillati</taxon>
        <taxon>Cyanobacteriota</taxon>
        <taxon>Cyanophyceae</taxon>
        <taxon>Nostocales</taxon>
        <taxon>Nostocaceae</taxon>
        <taxon>Nostoc</taxon>
    </lineage>
</organism>
<keyword id="KW-0378">Hydrolase</keyword>
<keyword id="KW-1185">Reference proteome</keyword>
<dbReference type="EC" id="3.1.2.28" evidence="1"/>
<dbReference type="EMBL" id="BA000019">
    <property type="protein sequence ID" value="BAB74164.1"/>
    <property type="molecule type" value="Genomic_DNA"/>
</dbReference>
<dbReference type="PIR" id="AB2114">
    <property type="entry name" value="AB2114"/>
</dbReference>
<dbReference type="RefSeq" id="WP_010996621.1">
    <property type="nucleotide sequence ID" value="NZ_RSCN01000002.1"/>
</dbReference>
<dbReference type="SMR" id="Q8YU89"/>
<dbReference type="STRING" id="103690.gene:10494496"/>
<dbReference type="KEGG" id="ana:alr2465"/>
<dbReference type="eggNOG" id="COG0824">
    <property type="taxonomic scope" value="Bacteria"/>
</dbReference>
<dbReference type="OrthoDB" id="9800856at2"/>
<dbReference type="UniPathway" id="UPA00995"/>
<dbReference type="UniPathway" id="UPA01057">
    <property type="reaction ID" value="UER01033"/>
</dbReference>
<dbReference type="Proteomes" id="UP000002483">
    <property type="component" value="Chromosome"/>
</dbReference>
<dbReference type="GO" id="GO:0061522">
    <property type="term" value="F:1,4-dihydroxy-2-naphthoyl-CoA thioesterase activity"/>
    <property type="evidence" value="ECO:0007669"/>
    <property type="project" value="UniProtKB-EC"/>
</dbReference>
<dbReference type="GO" id="GO:0047617">
    <property type="term" value="F:fatty acyl-CoA hydrolase activity"/>
    <property type="evidence" value="ECO:0007669"/>
    <property type="project" value="TreeGrafter"/>
</dbReference>
<dbReference type="GO" id="GO:0042372">
    <property type="term" value="P:phylloquinone biosynthetic process"/>
    <property type="evidence" value="ECO:0007669"/>
    <property type="project" value="UniProtKB-UniRule"/>
</dbReference>
<dbReference type="CDD" id="cd00586">
    <property type="entry name" value="4HBT"/>
    <property type="match status" value="1"/>
</dbReference>
<dbReference type="Gene3D" id="3.10.129.10">
    <property type="entry name" value="Hotdog Thioesterase"/>
    <property type="match status" value="1"/>
</dbReference>
<dbReference type="HAMAP" id="MF_02101">
    <property type="entry name" value="DHNA_CoA_hydrolase"/>
    <property type="match status" value="1"/>
</dbReference>
<dbReference type="InterPro" id="IPR050563">
    <property type="entry name" value="4-hydroxybenzoyl-CoA_TE"/>
</dbReference>
<dbReference type="InterPro" id="IPR022829">
    <property type="entry name" value="DHNA_CoA_hydrolase"/>
</dbReference>
<dbReference type="InterPro" id="IPR029069">
    <property type="entry name" value="HotDog_dom_sf"/>
</dbReference>
<dbReference type="PANTHER" id="PTHR31793">
    <property type="entry name" value="4-HYDROXYBENZOYL-COA THIOESTERASE FAMILY MEMBER"/>
    <property type="match status" value="1"/>
</dbReference>
<dbReference type="PANTHER" id="PTHR31793:SF37">
    <property type="entry name" value="ACYL-COA THIOESTER HYDROLASE YBGC"/>
    <property type="match status" value="1"/>
</dbReference>
<dbReference type="Pfam" id="PF13279">
    <property type="entry name" value="4HBT_2"/>
    <property type="match status" value="1"/>
</dbReference>
<dbReference type="SUPFAM" id="SSF54637">
    <property type="entry name" value="Thioesterase/thiol ester dehydrase-isomerase"/>
    <property type="match status" value="1"/>
</dbReference>
<evidence type="ECO:0000255" key="1">
    <source>
        <dbReference type="HAMAP-Rule" id="MF_02101"/>
    </source>
</evidence>
<accession>Q8YU89</accession>